<accession>Q823K4</accession>
<feature type="chain" id="PRO_0000165513" description="Holliday junction branch migration complex subunit RuvB">
    <location>
        <begin position="1"/>
        <end position="337"/>
    </location>
</feature>
<feature type="region of interest" description="Large ATPase domain (RuvB-L)" evidence="1">
    <location>
        <begin position="1"/>
        <end position="179"/>
    </location>
</feature>
<feature type="region of interest" description="Small ATPAse domain (RuvB-S)" evidence="1">
    <location>
        <begin position="180"/>
        <end position="250"/>
    </location>
</feature>
<feature type="region of interest" description="Head domain (RuvB-H)" evidence="1">
    <location>
        <begin position="253"/>
        <end position="337"/>
    </location>
</feature>
<feature type="binding site" evidence="1">
    <location>
        <position position="18"/>
    </location>
    <ligand>
        <name>ATP</name>
        <dbReference type="ChEBI" id="CHEBI:30616"/>
    </ligand>
</feature>
<feature type="binding site" evidence="1">
    <location>
        <position position="19"/>
    </location>
    <ligand>
        <name>ATP</name>
        <dbReference type="ChEBI" id="CHEBI:30616"/>
    </ligand>
</feature>
<feature type="binding site" evidence="1">
    <location>
        <position position="60"/>
    </location>
    <ligand>
        <name>ATP</name>
        <dbReference type="ChEBI" id="CHEBI:30616"/>
    </ligand>
</feature>
<feature type="binding site" evidence="1">
    <location>
        <position position="63"/>
    </location>
    <ligand>
        <name>ATP</name>
        <dbReference type="ChEBI" id="CHEBI:30616"/>
    </ligand>
</feature>
<feature type="binding site" evidence="1">
    <location>
        <position position="64"/>
    </location>
    <ligand>
        <name>ATP</name>
        <dbReference type="ChEBI" id="CHEBI:30616"/>
    </ligand>
</feature>
<feature type="binding site" evidence="1">
    <location>
        <position position="64"/>
    </location>
    <ligand>
        <name>Mg(2+)</name>
        <dbReference type="ChEBI" id="CHEBI:18420"/>
    </ligand>
</feature>
<feature type="binding site" evidence="1">
    <location>
        <position position="65"/>
    </location>
    <ligand>
        <name>ATP</name>
        <dbReference type="ChEBI" id="CHEBI:30616"/>
    </ligand>
</feature>
<feature type="binding site" evidence="1">
    <location>
        <begin position="126"/>
        <end position="128"/>
    </location>
    <ligand>
        <name>ATP</name>
        <dbReference type="ChEBI" id="CHEBI:30616"/>
    </ligand>
</feature>
<feature type="binding site" evidence="1">
    <location>
        <position position="169"/>
    </location>
    <ligand>
        <name>ATP</name>
        <dbReference type="ChEBI" id="CHEBI:30616"/>
    </ligand>
</feature>
<feature type="binding site" evidence="1">
    <location>
        <position position="179"/>
    </location>
    <ligand>
        <name>ATP</name>
        <dbReference type="ChEBI" id="CHEBI:30616"/>
    </ligand>
</feature>
<feature type="binding site" evidence="1">
    <location>
        <position position="216"/>
    </location>
    <ligand>
        <name>ATP</name>
        <dbReference type="ChEBI" id="CHEBI:30616"/>
    </ligand>
</feature>
<feature type="binding site" evidence="1">
    <location>
        <position position="308"/>
    </location>
    <ligand>
        <name>DNA</name>
        <dbReference type="ChEBI" id="CHEBI:16991"/>
    </ligand>
</feature>
<feature type="binding site" evidence="1">
    <location>
        <position position="313"/>
    </location>
    <ligand>
        <name>DNA</name>
        <dbReference type="ChEBI" id="CHEBI:16991"/>
    </ligand>
</feature>
<comment type="function">
    <text evidence="1">The RuvA-RuvB-RuvC complex processes Holliday junction (HJ) DNA during genetic recombination and DNA repair, while the RuvA-RuvB complex plays an important role in the rescue of blocked DNA replication forks via replication fork reversal (RFR). RuvA specifically binds to HJ cruciform DNA, conferring on it an open structure. The RuvB hexamer acts as an ATP-dependent pump, pulling dsDNA into and through the RuvAB complex. RuvB forms 2 homohexamers on either side of HJ DNA bound by 1 or 2 RuvA tetramers; 4 subunits per hexamer contact DNA at a time. Coordinated motions by a converter formed by DNA-disengaged RuvB subunits stimulates ATP hydrolysis and nucleotide exchange. Immobilization of the converter enables RuvB to convert the ATP-contained energy into a lever motion, pulling 2 nucleotides of DNA out of the RuvA tetramer per ATP hydrolyzed, thus driving DNA branch migration. The RuvB motors rotate together with the DNA substrate, which together with the progressing nucleotide cycle form the mechanistic basis for DNA recombination by continuous HJ branch migration. Branch migration allows RuvC to scan DNA until it finds its consensus sequence, where it cleaves and resolves cruciform DNA.</text>
</comment>
<comment type="catalytic activity">
    <reaction evidence="1">
        <text>ATP + H2O = ADP + phosphate + H(+)</text>
        <dbReference type="Rhea" id="RHEA:13065"/>
        <dbReference type="ChEBI" id="CHEBI:15377"/>
        <dbReference type="ChEBI" id="CHEBI:15378"/>
        <dbReference type="ChEBI" id="CHEBI:30616"/>
        <dbReference type="ChEBI" id="CHEBI:43474"/>
        <dbReference type="ChEBI" id="CHEBI:456216"/>
    </reaction>
</comment>
<comment type="subunit">
    <text evidence="1">Homohexamer. Forms an RuvA(8)-RuvB(12)-Holliday junction (HJ) complex. HJ DNA is sandwiched between 2 RuvA tetramers; dsDNA enters through RuvA and exits via RuvB. An RuvB hexamer assembles on each DNA strand where it exits the tetramer. Each RuvB hexamer is contacted by two RuvA subunits (via domain III) on 2 adjacent RuvB subunits; this complex drives branch migration. In the full resolvosome a probable DNA-RuvA(4)-RuvB(12)-RuvC(2) complex forms which resolves the HJ.</text>
</comment>
<comment type="subcellular location">
    <subcellularLocation>
        <location evidence="1">Cytoplasm</location>
    </subcellularLocation>
</comment>
<comment type="domain">
    <text evidence="1">Has 3 domains, the large (RuvB-L) and small ATPase (RuvB-S) domains and the C-terminal head (RuvB-H) domain. The head domain binds DNA, while the ATPase domains jointly bind ATP, ADP or are empty depending on the state of the subunit in the translocation cycle. During a single DNA translocation step the structure of each domain remains the same, but their relative positions change.</text>
</comment>
<comment type="similarity">
    <text evidence="1">Belongs to the RuvB family.</text>
</comment>
<name>RUVB_CHLCV</name>
<proteinExistence type="inferred from homology"/>
<protein>
    <recommendedName>
        <fullName evidence="1">Holliday junction branch migration complex subunit RuvB</fullName>
        <ecNumber evidence="1">3.6.4.-</ecNumber>
    </recommendedName>
</protein>
<evidence type="ECO:0000255" key="1">
    <source>
        <dbReference type="HAMAP-Rule" id="MF_00016"/>
    </source>
</evidence>
<keyword id="KW-0067">ATP-binding</keyword>
<keyword id="KW-0963">Cytoplasm</keyword>
<keyword id="KW-0227">DNA damage</keyword>
<keyword id="KW-0233">DNA recombination</keyword>
<keyword id="KW-0234">DNA repair</keyword>
<keyword id="KW-0238">DNA-binding</keyword>
<keyword id="KW-0378">Hydrolase</keyword>
<keyword id="KW-0547">Nucleotide-binding</keyword>
<reference key="1">
    <citation type="journal article" date="2003" name="Nucleic Acids Res.">
        <title>Genome sequence of Chlamydophila caviae (Chlamydia psittaci GPIC): examining the role of niche-specific genes in the evolution of the Chlamydiaceae.</title>
        <authorList>
            <person name="Read T.D."/>
            <person name="Myers G.S.A."/>
            <person name="Brunham R.C."/>
            <person name="Nelson W.C."/>
            <person name="Paulsen I.T."/>
            <person name="Heidelberg J.F."/>
            <person name="Holtzapple E.K."/>
            <person name="Khouri H.M."/>
            <person name="Federova N.B."/>
            <person name="Carty H.A."/>
            <person name="Umayam L.A."/>
            <person name="Haft D.H."/>
            <person name="Peterson J.D."/>
            <person name="Beanan M.J."/>
            <person name="White O."/>
            <person name="Salzberg S.L."/>
            <person name="Hsia R.-C."/>
            <person name="McClarty G."/>
            <person name="Rank R.G."/>
            <person name="Bavoil P.M."/>
            <person name="Fraser C.M."/>
        </authorList>
    </citation>
    <scope>NUCLEOTIDE SEQUENCE [LARGE SCALE GENOMIC DNA]</scope>
    <source>
        <strain>ATCC VR-813 / DSM 19441 / 03DC25 / GPIC</strain>
    </source>
</reference>
<sequence length="337" mass="37331">MTHQVSVLHQDKKFDISLRPKGLREFCGQKQLTERLELFLHAAVQRGEVPGHCLFFGPPGLGKTSLAHIVAHTVGKGLVVASGPQLVKPSDLLGLLTSLQEGDVFFIDEIHRMGKVAEEYLYSAMEDYKIDITIDSGPGARSVSVDLAPFSLVGATTRSGMLSEPLRARFSFTGRMSYYSDEDLTTILKRSSNLLGIDADTAALYEIARRSRGTPRLANNLLRWVRDFAQMREGNCINSDVAEKALAMLLIDDWGLNEIDIKLLTTIIDYYQGGPVGIKTLSVAVGEDIKTLEDVYEPFLILKGLLKKTSRGRMVTQIAYNHLKRCSDNLQSLGEEK</sequence>
<organism>
    <name type="scientific">Chlamydia caviae (strain ATCC VR-813 / DSM 19441 / 03DC25 / GPIC)</name>
    <name type="common">Chlamydophila caviae</name>
    <dbReference type="NCBI Taxonomy" id="227941"/>
    <lineage>
        <taxon>Bacteria</taxon>
        <taxon>Pseudomonadati</taxon>
        <taxon>Chlamydiota</taxon>
        <taxon>Chlamydiia</taxon>
        <taxon>Chlamydiales</taxon>
        <taxon>Chlamydiaceae</taxon>
        <taxon>Chlamydia/Chlamydophila group</taxon>
        <taxon>Chlamydia</taxon>
    </lineage>
</organism>
<dbReference type="EC" id="3.6.4.-" evidence="1"/>
<dbReference type="EMBL" id="AE015925">
    <property type="protein sequence ID" value="AAP05152.1"/>
    <property type="molecule type" value="Genomic_DNA"/>
</dbReference>
<dbReference type="RefSeq" id="WP_011006368.1">
    <property type="nucleotide sequence ID" value="NC_003361.3"/>
</dbReference>
<dbReference type="SMR" id="Q823K4"/>
<dbReference type="STRING" id="227941.CCA_00406"/>
<dbReference type="KEGG" id="cca:CCA_00406"/>
<dbReference type="eggNOG" id="COG2255">
    <property type="taxonomic scope" value="Bacteria"/>
</dbReference>
<dbReference type="HOGENOM" id="CLU_055599_1_0_0"/>
<dbReference type="OrthoDB" id="9804478at2"/>
<dbReference type="Proteomes" id="UP000002193">
    <property type="component" value="Chromosome"/>
</dbReference>
<dbReference type="GO" id="GO:0005737">
    <property type="term" value="C:cytoplasm"/>
    <property type="evidence" value="ECO:0007669"/>
    <property type="project" value="UniProtKB-SubCell"/>
</dbReference>
<dbReference type="GO" id="GO:0048476">
    <property type="term" value="C:Holliday junction resolvase complex"/>
    <property type="evidence" value="ECO:0007669"/>
    <property type="project" value="UniProtKB-UniRule"/>
</dbReference>
<dbReference type="GO" id="GO:0005524">
    <property type="term" value="F:ATP binding"/>
    <property type="evidence" value="ECO:0007669"/>
    <property type="project" value="UniProtKB-UniRule"/>
</dbReference>
<dbReference type="GO" id="GO:0016887">
    <property type="term" value="F:ATP hydrolysis activity"/>
    <property type="evidence" value="ECO:0007669"/>
    <property type="project" value="InterPro"/>
</dbReference>
<dbReference type="GO" id="GO:0000400">
    <property type="term" value="F:four-way junction DNA binding"/>
    <property type="evidence" value="ECO:0007669"/>
    <property type="project" value="UniProtKB-UniRule"/>
</dbReference>
<dbReference type="GO" id="GO:0009378">
    <property type="term" value="F:four-way junction helicase activity"/>
    <property type="evidence" value="ECO:0007669"/>
    <property type="project" value="InterPro"/>
</dbReference>
<dbReference type="GO" id="GO:0006310">
    <property type="term" value="P:DNA recombination"/>
    <property type="evidence" value="ECO:0007669"/>
    <property type="project" value="UniProtKB-UniRule"/>
</dbReference>
<dbReference type="GO" id="GO:0006281">
    <property type="term" value="P:DNA repair"/>
    <property type="evidence" value="ECO:0007669"/>
    <property type="project" value="UniProtKB-UniRule"/>
</dbReference>
<dbReference type="CDD" id="cd00009">
    <property type="entry name" value="AAA"/>
    <property type="match status" value="1"/>
</dbReference>
<dbReference type="Gene3D" id="1.10.8.60">
    <property type="match status" value="1"/>
</dbReference>
<dbReference type="Gene3D" id="3.40.50.300">
    <property type="entry name" value="P-loop containing nucleotide triphosphate hydrolases"/>
    <property type="match status" value="1"/>
</dbReference>
<dbReference type="Gene3D" id="1.10.10.10">
    <property type="entry name" value="Winged helix-like DNA-binding domain superfamily/Winged helix DNA-binding domain"/>
    <property type="match status" value="1"/>
</dbReference>
<dbReference type="HAMAP" id="MF_00016">
    <property type="entry name" value="DNA_HJ_migration_RuvB"/>
    <property type="match status" value="1"/>
</dbReference>
<dbReference type="InterPro" id="IPR003593">
    <property type="entry name" value="AAA+_ATPase"/>
</dbReference>
<dbReference type="InterPro" id="IPR041445">
    <property type="entry name" value="AAA_lid_4"/>
</dbReference>
<dbReference type="InterPro" id="IPR004605">
    <property type="entry name" value="DNA_helicase_Holl-junc_RuvB"/>
</dbReference>
<dbReference type="InterPro" id="IPR027417">
    <property type="entry name" value="P-loop_NTPase"/>
</dbReference>
<dbReference type="InterPro" id="IPR008824">
    <property type="entry name" value="RuvB-like_N"/>
</dbReference>
<dbReference type="InterPro" id="IPR008823">
    <property type="entry name" value="RuvB_C"/>
</dbReference>
<dbReference type="InterPro" id="IPR036388">
    <property type="entry name" value="WH-like_DNA-bd_sf"/>
</dbReference>
<dbReference type="InterPro" id="IPR036390">
    <property type="entry name" value="WH_DNA-bd_sf"/>
</dbReference>
<dbReference type="NCBIfam" id="NF000868">
    <property type="entry name" value="PRK00080.1"/>
    <property type="match status" value="1"/>
</dbReference>
<dbReference type="NCBIfam" id="TIGR00635">
    <property type="entry name" value="ruvB"/>
    <property type="match status" value="1"/>
</dbReference>
<dbReference type="PANTHER" id="PTHR42848">
    <property type="match status" value="1"/>
</dbReference>
<dbReference type="PANTHER" id="PTHR42848:SF1">
    <property type="entry name" value="HOLLIDAY JUNCTION BRANCH MIGRATION COMPLEX SUBUNIT RUVB"/>
    <property type="match status" value="1"/>
</dbReference>
<dbReference type="Pfam" id="PF17864">
    <property type="entry name" value="AAA_lid_4"/>
    <property type="match status" value="1"/>
</dbReference>
<dbReference type="Pfam" id="PF05491">
    <property type="entry name" value="RuvB_C"/>
    <property type="match status" value="1"/>
</dbReference>
<dbReference type="Pfam" id="PF05496">
    <property type="entry name" value="RuvB_N"/>
    <property type="match status" value="1"/>
</dbReference>
<dbReference type="SMART" id="SM00382">
    <property type="entry name" value="AAA"/>
    <property type="match status" value="1"/>
</dbReference>
<dbReference type="SUPFAM" id="SSF52540">
    <property type="entry name" value="P-loop containing nucleoside triphosphate hydrolases"/>
    <property type="match status" value="1"/>
</dbReference>
<dbReference type="SUPFAM" id="SSF46785">
    <property type="entry name" value="Winged helix' DNA-binding domain"/>
    <property type="match status" value="1"/>
</dbReference>
<gene>
    <name evidence="1" type="primary">ruvB</name>
    <name type="ordered locus">CCA_00406</name>
</gene>